<proteinExistence type="inferred from homology"/>
<name>RL22_ARTS2</name>
<accession>A0JZ79</accession>
<feature type="chain" id="PRO_1000067606" description="Large ribosomal subunit protein uL22">
    <location>
        <begin position="1"/>
        <end position="121"/>
    </location>
</feature>
<sequence length="121" mass="13364">MEAKAIARHIRVTPMKARRVVNLVRGKQANEALAILKFAPQAASEPVFKVVQSAISNARVLADRDGVAFDEGDLIISEAFVDEGPTMKRFQPRAQGRAFQIKKRTSHITVVVATPEKEEAR</sequence>
<gene>
    <name evidence="1" type="primary">rplV</name>
    <name type="ordered locus">Arth_2970</name>
</gene>
<comment type="function">
    <text evidence="1">This protein binds specifically to 23S rRNA; its binding is stimulated by other ribosomal proteins, e.g. L4, L17, and L20. It is important during the early stages of 50S assembly. It makes multiple contacts with different domains of the 23S rRNA in the assembled 50S subunit and ribosome (By similarity).</text>
</comment>
<comment type="function">
    <text evidence="1">The globular domain of the protein is located near the polypeptide exit tunnel on the outside of the subunit, while an extended beta-hairpin is found that lines the wall of the exit tunnel in the center of the 70S ribosome.</text>
</comment>
<comment type="subunit">
    <text evidence="1">Part of the 50S ribosomal subunit.</text>
</comment>
<comment type="similarity">
    <text evidence="1">Belongs to the universal ribosomal protein uL22 family.</text>
</comment>
<dbReference type="EMBL" id="CP000454">
    <property type="protein sequence ID" value="ABK04349.1"/>
    <property type="molecule type" value="Genomic_DNA"/>
</dbReference>
<dbReference type="RefSeq" id="WP_003803798.1">
    <property type="nucleotide sequence ID" value="NC_008541.1"/>
</dbReference>
<dbReference type="SMR" id="A0JZ79"/>
<dbReference type="STRING" id="290399.Arth_2970"/>
<dbReference type="KEGG" id="art:Arth_2970"/>
<dbReference type="eggNOG" id="COG0091">
    <property type="taxonomic scope" value="Bacteria"/>
</dbReference>
<dbReference type="HOGENOM" id="CLU_083987_3_3_11"/>
<dbReference type="OrthoDB" id="9805969at2"/>
<dbReference type="Proteomes" id="UP000000754">
    <property type="component" value="Chromosome"/>
</dbReference>
<dbReference type="GO" id="GO:0022625">
    <property type="term" value="C:cytosolic large ribosomal subunit"/>
    <property type="evidence" value="ECO:0007669"/>
    <property type="project" value="TreeGrafter"/>
</dbReference>
<dbReference type="GO" id="GO:0019843">
    <property type="term" value="F:rRNA binding"/>
    <property type="evidence" value="ECO:0007669"/>
    <property type="project" value="UniProtKB-UniRule"/>
</dbReference>
<dbReference type="GO" id="GO:0003735">
    <property type="term" value="F:structural constituent of ribosome"/>
    <property type="evidence" value="ECO:0007669"/>
    <property type="project" value="InterPro"/>
</dbReference>
<dbReference type="GO" id="GO:0006412">
    <property type="term" value="P:translation"/>
    <property type="evidence" value="ECO:0007669"/>
    <property type="project" value="UniProtKB-UniRule"/>
</dbReference>
<dbReference type="CDD" id="cd00336">
    <property type="entry name" value="Ribosomal_L22"/>
    <property type="match status" value="1"/>
</dbReference>
<dbReference type="Gene3D" id="3.90.470.10">
    <property type="entry name" value="Ribosomal protein L22/L17"/>
    <property type="match status" value="1"/>
</dbReference>
<dbReference type="HAMAP" id="MF_01331_B">
    <property type="entry name" value="Ribosomal_uL22_B"/>
    <property type="match status" value="1"/>
</dbReference>
<dbReference type="InterPro" id="IPR001063">
    <property type="entry name" value="Ribosomal_uL22"/>
</dbReference>
<dbReference type="InterPro" id="IPR005727">
    <property type="entry name" value="Ribosomal_uL22_bac/chlpt-type"/>
</dbReference>
<dbReference type="InterPro" id="IPR047867">
    <property type="entry name" value="Ribosomal_uL22_bac/org-type"/>
</dbReference>
<dbReference type="InterPro" id="IPR018260">
    <property type="entry name" value="Ribosomal_uL22_CS"/>
</dbReference>
<dbReference type="InterPro" id="IPR036394">
    <property type="entry name" value="Ribosomal_uL22_sf"/>
</dbReference>
<dbReference type="NCBIfam" id="TIGR01044">
    <property type="entry name" value="rplV_bact"/>
    <property type="match status" value="1"/>
</dbReference>
<dbReference type="PANTHER" id="PTHR13501">
    <property type="entry name" value="CHLOROPLAST 50S RIBOSOMAL PROTEIN L22-RELATED"/>
    <property type="match status" value="1"/>
</dbReference>
<dbReference type="PANTHER" id="PTHR13501:SF8">
    <property type="entry name" value="LARGE RIBOSOMAL SUBUNIT PROTEIN UL22M"/>
    <property type="match status" value="1"/>
</dbReference>
<dbReference type="Pfam" id="PF00237">
    <property type="entry name" value="Ribosomal_L22"/>
    <property type="match status" value="1"/>
</dbReference>
<dbReference type="SUPFAM" id="SSF54843">
    <property type="entry name" value="Ribosomal protein L22"/>
    <property type="match status" value="1"/>
</dbReference>
<dbReference type="PROSITE" id="PS00464">
    <property type="entry name" value="RIBOSOMAL_L22"/>
    <property type="match status" value="1"/>
</dbReference>
<evidence type="ECO:0000255" key="1">
    <source>
        <dbReference type="HAMAP-Rule" id="MF_01331"/>
    </source>
</evidence>
<evidence type="ECO:0000305" key="2"/>
<keyword id="KW-1185">Reference proteome</keyword>
<keyword id="KW-0687">Ribonucleoprotein</keyword>
<keyword id="KW-0689">Ribosomal protein</keyword>
<keyword id="KW-0694">RNA-binding</keyword>
<keyword id="KW-0699">rRNA-binding</keyword>
<organism>
    <name type="scientific">Arthrobacter sp. (strain FB24)</name>
    <dbReference type="NCBI Taxonomy" id="290399"/>
    <lineage>
        <taxon>Bacteria</taxon>
        <taxon>Bacillati</taxon>
        <taxon>Actinomycetota</taxon>
        <taxon>Actinomycetes</taxon>
        <taxon>Micrococcales</taxon>
        <taxon>Micrococcaceae</taxon>
        <taxon>Arthrobacter</taxon>
    </lineage>
</organism>
<reference key="1">
    <citation type="journal article" date="2013" name="Stand. Genomic Sci.">
        <title>Complete genome sequence of Arthrobacter sp. strain FB24.</title>
        <authorList>
            <person name="Nakatsu C.H."/>
            <person name="Barabote R."/>
            <person name="Thompson S."/>
            <person name="Bruce D."/>
            <person name="Detter C."/>
            <person name="Brettin T."/>
            <person name="Han C."/>
            <person name="Beasley F."/>
            <person name="Chen W."/>
            <person name="Konopka A."/>
            <person name="Xie G."/>
        </authorList>
    </citation>
    <scope>NUCLEOTIDE SEQUENCE [LARGE SCALE GENOMIC DNA]</scope>
    <source>
        <strain>FB24</strain>
    </source>
</reference>
<protein>
    <recommendedName>
        <fullName evidence="1">Large ribosomal subunit protein uL22</fullName>
    </recommendedName>
    <alternativeName>
        <fullName evidence="2">50S ribosomal protein L22</fullName>
    </alternativeName>
</protein>